<accession>A9MPN7</accession>
<feature type="chain" id="PRO_0000328910" description="UPF0213 protein YhbQ">
    <location>
        <begin position="1"/>
        <end position="100"/>
    </location>
</feature>
<feature type="domain" description="GIY-YIG" evidence="1">
    <location>
        <begin position="2"/>
        <end position="77"/>
    </location>
</feature>
<comment type="similarity">
    <text evidence="1">Belongs to the UPF0213 family.</text>
</comment>
<comment type="sequence caution" evidence="2">
    <conflict type="erroneous initiation">
        <sequence resource="EMBL-CDS" id="ABX24131"/>
    </conflict>
</comment>
<protein>
    <recommendedName>
        <fullName evidence="1">UPF0213 protein YhbQ</fullName>
    </recommendedName>
</protein>
<evidence type="ECO:0000255" key="1">
    <source>
        <dbReference type="HAMAP-Rule" id="MF_01029"/>
    </source>
</evidence>
<evidence type="ECO:0000305" key="2"/>
<dbReference type="EMBL" id="CP000880">
    <property type="protein sequence ID" value="ABX24131.1"/>
    <property type="status" value="ALT_INIT"/>
    <property type="molecule type" value="Genomic_DNA"/>
</dbReference>
<dbReference type="SMR" id="A9MPN7"/>
<dbReference type="STRING" id="41514.SARI_04352"/>
<dbReference type="KEGG" id="ses:SARI_04352"/>
<dbReference type="HOGENOM" id="CLU_135650_0_1_6"/>
<dbReference type="Proteomes" id="UP000002084">
    <property type="component" value="Chromosome"/>
</dbReference>
<dbReference type="CDD" id="cd10456">
    <property type="entry name" value="GIY-YIG_UPF0213"/>
    <property type="match status" value="1"/>
</dbReference>
<dbReference type="Gene3D" id="3.40.1440.10">
    <property type="entry name" value="GIY-YIG endonuclease"/>
    <property type="match status" value="1"/>
</dbReference>
<dbReference type="HAMAP" id="MF_01029">
    <property type="entry name" value="UPF0213"/>
    <property type="match status" value="1"/>
</dbReference>
<dbReference type="InterPro" id="IPR000305">
    <property type="entry name" value="GIY-YIG_endonuc"/>
</dbReference>
<dbReference type="InterPro" id="IPR035901">
    <property type="entry name" value="GIY-YIG_endonuc_sf"/>
</dbReference>
<dbReference type="InterPro" id="IPR050190">
    <property type="entry name" value="UPF0213_domain"/>
</dbReference>
<dbReference type="InterPro" id="IPR022992">
    <property type="entry name" value="UPF0213_GIY-YIG_endonuc"/>
</dbReference>
<dbReference type="PANTHER" id="PTHR34477">
    <property type="entry name" value="UPF0213 PROTEIN YHBQ"/>
    <property type="match status" value="1"/>
</dbReference>
<dbReference type="PANTHER" id="PTHR34477:SF1">
    <property type="entry name" value="UPF0213 PROTEIN YHBQ"/>
    <property type="match status" value="1"/>
</dbReference>
<dbReference type="Pfam" id="PF01541">
    <property type="entry name" value="GIY-YIG"/>
    <property type="match status" value="1"/>
</dbReference>
<dbReference type="SMART" id="SM00465">
    <property type="entry name" value="GIYc"/>
    <property type="match status" value="1"/>
</dbReference>
<dbReference type="SUPFAM" id="SSF82771">
    <property type="entry name" value="GIY-YIG endonuclease"/>
    <property type="match status" value="1"/>
</dbReference>
<dbReference type="PROSITE" id="PS50164">
    <property type="entry name" value="GIY_YIG"/>
    <property type="match status" value="1"/>
</dbReference>
<sequence>MTPWYLYLIRTADNALYTGITTDVARRYRQHQTGKGAKALRGKGELTLAFAAQVGDRSLALRIEYRIKQLTKRQKERLVTEQEAFESLLSSLQTPVLKND</sequence>
<name>YHBQ_SALAR</name>
<reference key="1">
    <citation type="submission" date="2007-11" db="EMBL/GenBank/DDBJ databases">
        <authorList>
            <consortium name="The Salmonella enterica serovar Arizonae Genome Sequencing Project"/>
            <person name="McClelland M."/>
            <person name="Sanderson E.K."/>
            <person name="Porwollik S."/>
            <person name="Spieth J."/>
            <person name="Clifton W.S."/>
            <person name="Fulton R."/>
            <person name="Chunyan W."/>
            <person name="Wollam A."/>
            <person name="Shah N."/>
            <person name="Pepin K."/>
            <person name="Bhonagiri V."/>
            <person name="Nash W."/>
            <person name="Johnson M."/>
            <person name="Thiruvilangam P."/>
            <person name="Wilson R."/>
        </authorList>
    </citation>
    <scope>NUCLEOTIDE SEQUENCE [LARGE SCALE GENOMIC DNA]</scope>
    <source>
        <strain>ATCC BAA-731 / CDC346-86 / RSK2980</strain>
    </source>
</reference>
<gene>
    <name evidence="1" type="primary">yhbQ</name>
    <name type="ordered locus">SARI_04352</name>
</gene>
<proteinExistence type="inferred from homology"/>
<organism>
    <name type="scientific">Salmonella arizonae (strain ATCC BAA-731 / CDC346-86 / RSK2980)</name>
    <dbReference type="NCBI Taxonomy" id="41514"/>
    <lineage>
        <taxon>Bacteria</taxon>
        <taxon>Pseudomonadati</taxon>
        <taxon>Pseudomonadota</taxon>
        <taxon>Gammaproteobacteria</taxon>
        <taxon>Enterobacterales</taxon>
        <taxon>Enterobacteriaceae</taxon>
        <taxon>Salmonella</taxon>
    </lineage>
</organism>
<keyword id="KW-1185">Reference proteome</keyword>